<sequence>MSKVTVFDHPLIKHKLTILRDKNTGSNQFRQLVSEIATLMCYEVTRDFKLEDCEVETPIGKTTGQTLSGKKLGVVPILRAGLGMVEGFLSVLPAAKVGHIGLYRDPKTLKPVEYYCKLPKDVEERDIIVVDPMLATGGSAEAAITFLKEHGCKNIKLVNIIAAPEGIKMVQEKHPDVDIYVAGLDEKLNDHGYIVPGLGDAGDRLFGTK</sequence>
<accession>B0S2A9</accession>
<name>UPP_FINM2</name>
<organism>
    <name type="scientific">Finegoldia magna (strain ATCC 29328 / DSM 20472 / WAL 2508)</name>
    <name type="common">Peptostreptococcus magnus</name>
    <dbReference type="NCBI Taxonomy" id="334413"/>
    <lineage>
        <taxon>Bacteria</taxon>
        <taxon>Bacillati</taxon>
        <taxon>Bacillota</taxon>
        <taxon>Tissierellia</taxon>
        <taxon>Tissierellales</taxon>
        <taxon>Peptoniphilaceae</taxon>
        <taxon>Finegoldia</taxon>
    </lineage>
</organism>
<proteinExistence type="inferred from homology"/>
<dbReference type="EC" id="2.4.2.9" evidence="1"/>
<dbReference type="EMBL" id="AP008971">
    <property type="protein sequence ID" value="BAG08499.1"/>
    <property type="molecule type" value="Genomic_DNA"/>
</dbReference>
<dbReference type="RefSeq" id="WP_002837744.1">
    <property type="nucleotide sequence ID" value="NC_010376.1"/>
</dbReference>
<dbReference type="SMR" id="B0S2A9"/>
<dbReference type="STRING" id="334413.FMG_1081"/>
<dbReference type="KEGG" id="fma:FMG_1081"/>
<dbReference type="eggNOG" id="COG0035">
    <property type="taxonomic scope" value="Bacteria"/>
</dbReference>
<dbReference type="HOGENOM" id="CLU_067096_2_2_9"/>
<dbReference type="UniPathway" id="UPA00574">
    <property type="reaction ID" value="UER00636"/>
</dbReference>
<dbReference type="Proteomes" id="UP000001319">
    <property type="component" value="Chromosome"/>
</dbReference>
<dbReference type="GO" id="GO:0005525">
    <property type="term" value="F:GTP binding"/>
    <property type="evidence" value="ECO:0007669"/>
    <property type="project" value="UniProtKB-KW"/>
</dbReference>
<dbReference type="GO" id="GO:0000287">
    <property type="term" value="F:magnesium ion binding"/>
    <property type="evidence" value="ECO:0007669"/>
    <property type="project" value="UniProtKB-UniRule"/>
</dbReference>
<dbReference type="GO" id="GO:0004845">
    <property type="term" value="F:uracil phosphoribosyltransferase activity"/>
    <property type="evidence" value="ECO:0007669"/>
    <property type="project" value="UniProtKB-UniRule"/>
</dbReference>
<dbReference type="GO" id="GO:0044206">
    <property type="term" value="P:UMP salvage"/>
    <property type="evidence" value="ECO:0007669"/>
    <property type="project" value="UniProtKB-UniRule"/>
</dbReference>
<dbReference type="GO" id="GO:0006223">
    <property type="term" value="P:uracil salvage"/>
    <property type="evidence" value="ECO:0007669"/>
    <property type="project" value="InterPro"/>
</dbReference>
<dbReference type="CDD" id="cd06223">
    <property type="entry name" value="PRTases_typeI"/>
    <property type="match status" value="1"/>
</dbReference>
<dbReference type="FunFam" id="3.40.50.2020:FF:000003">
    <property type="entry name" value="Uracil phosphoribosyltransferase"/>
    <property type="match status" value="1"/>
</dbReference>
<dbReference type="Gene3D" id="3.40.50.2020">
    <property type="match status" value="1"/>
</dbReference>
<dbReference type="HAMAP" id="MF_01218_B">
    <property type="entry name" value="Upp_B"/>
    <property type="match status" value="1"/>
</dbReference>
<dbReference type="InterPro" id="IPR000836">
    <property type="entry name" value="PRibTrfase_dom"/>
</dbReference>
<dbReference type="InterPro" id="IPR029057">
    <property type="entry name" value="PRTase-like"/>
</dbReference>
<dbReference type="InterPro" id="IPR034332">
    <property type="entry name" value="Upp_B"/>
</dbReference>
<dbReference type="InterPro" id="IPR050054">
    <property type="entry name" value="UPRTase/APRTase"/>
</dbReference>
<dbReference type="InterPro" id="IPR005765">
    <property type="entry name" value="Ura_phspho_trans"/>
</dbReference>
<dbReference type="NCBIfam" id="NF001097">
    <property type="entry name" value="PRK00129.1"/>
    <property type="match status" value="1"/>
</dbReference>
<dbReference type="NCBIfam" id="TIGR01091">
    <property type="entry name" value="upp"/>
    <property type="match status" value="1"/>
</dbReference>
<dbReference type="PANTHER" id="PTHR32315">
    <property type="entry name" value="ADENINE PHOSPHORIBOSYLTRANSFERASE"/>
    <property type="match status" value="1"/>
</dbReference>
<dbReference type="PANTHER" id="PTHR32315:SF4">
    <property type="entry name" value="URACIL PHOSPHORIBOSYLTRANSFERASE, CHLOROPLASTIC"/>
    <property type="match status" value="1"/>
</dbReference>
<dbReference type="Pfam" id="PF14681">
    <property type="entry name" value="UPRTase"/>
    <property type="match status" value="1"/>
</dbReference>
<dbReference type="SUPFAM" id="SSF53271">
    <property type="entry name" value="PRTase-like"/>
    <property type="match status" value="1"/>
</dbReference>
<comment type="function">
    <text evidence="1">Catalyzes the conversion of uracil and 5-phospho-alpha-D-ribose 1-diphosphate (PRPP) to UMP and diphosphate.</text>
</comment>
<comment type="catalytic activity">
    <reaction evidence="1">
        <text>UMP + diphosphate = 5-phospho-alpha-D-ribose 1-diphosphate + uracil</text>
        <dbReference type="Rhea" id="RHEA:13017"/>
        <dbReference type="ChEBI" id="CHEBI:17568"/>
        <dbReference type="ChEBI" id="CHEBI:33019"/>
        <dbReference type="ChEBI" id="CHEBI:57865"/>
        <dbReference type="ChEBI" id="CHEBI:58017"/>
        <dbReference type="EC" id="2.4.2.9"/>
    </reaction>
</comment>
<comment type="cofactor">
    <cofactor evidence="1">
        <name>Mg(2+)</name>
        <dbReference type="ChEBI" id="CHEBI:18420"/>
    </cofactor>
    <text evidence="1">Binds 1 Mg(2+) ion per subunit. The magnesium is bound as Mg-PRPP.</text>
</comment>
<comment type="activity regulation">
    <text evidence="1">Allosterically activated by GTP.</text>
</comment>
<comment type="pathway">
    <text evidence="1">Pyrimidine metabolism; UMP biosynthesis via salvage pathway; UMP from uracil: step 1/1.</text>
</comment>
<comment type="similarity">
    <text evidence="1">Belongs to the UPRTase family.</text>
</comment>
<keyword id="KW-0021">Allosteric enzyme</keyword>
<keyword id="KW-0328">Glycosyltransferase</keyword>
<keyword id="KW-0342">GTP-binding</keyword>
<keyword id="KW-0460">Magnesium</keyword>
<keyword id="KW-0547">Nucleotide-binding</keyword>
<keyword id="KW-1185">Reference proteome</keyword>
<keyword id="KW-0808">Transferase</keyword>
<feature type="chain" id="PRO_1000139128" description="Uracil phosphoribosyltransferase">
    <location>
        <begin position="1"/>
        <end position="209"/>
    </location>
</feature>
<feature type="binding site" evidence="1">
    <location>
        <position position="79"/>
    </location>
    <ligand>
        <name>5-phospho-alpha-D-ribose 1-diphosphate</name>
        <dbReference type="ChEBI" id="CHEBI:58017"/>
    </ligand>
</feature>
<feature type="binding site" evidence="1">
    <location>
        <position position="104"/>
    </location>
    <ligand>
        <name>5-phospho-alpha-D-ribose 1-diphosphate</name>
        <dbReference type="ChEBI" id="CHEBI:58017"/>
    </ligand>
</feature>
<feature type="binding site" evidence="1">
    <location>
        <begin position="131"/>
        <end position="139"/>
    </location>
    <ligand>
        <name>5-phospho-alpha-D-ribose 1-diphosphate</name>
        <dbReference type="ChEBI" id="CHEBI:58017"/>
    </ligand>
</feature>
<feature type="binding site" evidence="1">
    <location>
        <position position="194"/>
    </location>
    <ligand>
        <name>uracil</name>
        <dbReference type="ChEBI" id="CHEBI:17568"/>
    </ligand>
</feature>
<feature type="binding site" evidence="1">
    <location>
        <begin position="199"/>
        <end position="201"/>
    </location>
    <ligand>
        <name>uracil</name>
        <dbReference type="ChEBI" id="CHEBI:17568"/>
    </ligand>
</feature>
<feature type="binding site" evidence="1">
    <location>
        <position position="200"/>
    </location>
    <ligand>
        <name>5-phospho-alpha-D-ribose 1-diphosphate</name>
        <dbReference type="ChEBI" id="CHEBI:58017"/>
    </ligand>
</feature>
<gene>
    <name evidence="1" type="primary">upp</name>
    <name type="ordered locus">FMG_1081</name>
</gene>
<evidence type="ECO:0000255" key="1">
    <source>
        <dbReference type="HAMAP-Rule" id="MF_01218"/>
    </source>
</evidence>
<protein>
    <recommendedName>
        <fullName evidence="1">Uracil phosphoribosyltransferase</fullName>
        <ecNumber evidence="1">2.4.2.9</ecNumber>
    </recommendedName>
    <alternativeName>
        <fullName evidence="1">UMP pyrophosphorylase</fullName>
    </alternativeName>
    <alternativeName>
        <fullName evidence="1">UPRTase</fullName>
    </alternativeName>
</protein>
<reference key="1">
    <citation type="journal article" date="2008" name="DNA Res.">
        <title>Complete genome sequence of Finegoldia magna, an anaerobic opportunistic pathogen.</title>
        <authorList>
            <person name="Goto T."/>
            <person name="Yamashita A."/>
            <person name="Hirakawa H."/>
            <person name="Matsutani M."/>
            <person name="Todo K."/>
            <person name="Ohshima K."/>
            <person name="Toh H."/>
            <person name="Miyamoto K."/>
            <person name="Kuhara S."/>
            <person name="Hattori M."/>
            <person name="Shimizu T."/>
            <person name="Akimoto S."/>
        </authorList>
    </citation>
    <scope>NUCLEOTIDE SEQUENCE [LARGE SCALE GENOMIC DNA]</scope>
    <source>
        <strain>ATCC 29328 / DSM 20472 / WAL 2508</strain>
    </source>
</reference>